<keyword id="KW-0058">Aromatic hydrocarbons catabolism</keyword>
<keyword id="KW-0274">FAD</keyword>
<keyword id="KW-0285">Flavoprotein</keyword>
<keyword id="KW-0520">NAD</keyword>
<keyword id="KW-0560">Oxidoreductase</keyword>
<evidence type="ECO:0000255" key="1">
    <source>
        <dbReference type="HAMAP-Rule" id="MF_01652"/>
    </source>
</evidence>
<feature type="chain" id="PRO_0000337640" description="3-(3-hydroxy-phenyl)propionate/3-hydroxycinnamic acid hydroxylase">
    <location>
        <begin position="1"/>
        <end position="573"/>
    </location>
</feature>
<feature type="binding site" evidence="1">
    <location>
        <begin position="18"/>
        <end position="47"/>
    </location>
    <ligand>
        <name>FAD</name>
        <dbReference type="ChEBI" id="CHEBI:57692"/>
    </ligand>
</feature>
<feature type="binding site" evidence="1">
    <location>
        <begin position="283"/>
        <end position="293"/>
    </location>
    <ligand>
        <name>FAD</name>
        <dbReference type="ChEBI" id="CHEBI:57692"/>
    </ligand>
</feature>
<dbReference type="EC" id="1.14.13.127" evidence="1"/>
<dbReference type="EMBL" id="CP000384">
    <property type="protein sequence ID" value="ABG09892.1"/>
    <property type="molecule type" value="Genomic_DNA"/>
</dbReference>
<dbReference type="SMR" id="Q1B5E2"/>
<dbReference type="KEGG" id="mmc:Mmcs_3786"/>
<dbReference type="HOGENOM" id="CLU_009665_20_2_11"/>
<dbReference type="BioCyc" id="MSP164756:G1G6O-3864-MONOMER"/>
<dbReference type="UniPathway" id="UPA00714"/>
<dbReference type="GO" id="GO:0008688">
    <property type="term" value="F:3-(3-hydroxyphenyl)propionate hydroxylase activity"/>
    <property type="evidence" value="ECO:0007669"/>
    <property type="project" value="UniProtKB-UniRule"/>
</dbReference>
<dbReference type="GO" id="GO:0071949">
    <property type="term" value="F:FAD binding"/>
    <property type="evidence" value="ECO:0007669"/>
    <property type="project" value="InterPro"/>
</dbReference>
<dbReference type="GO" id="GO:0019622">
    <property type="term" value="P:3-(3-hydroxy)phenylpropionate catabolic process"/>
    <property type="evidence" value="ECO:0007669"/>
    <property type="project" value="UniProtKB-UniRule"/>
</dbReference>
<dbReference type="GO" id="GO:0019380">
    <property type="term" value="P:3-phenylpropionate catabolic process"/>
    <property type="evidence" value="ECO:0007669"/>
    <property type="project" value="UniProtKB-UniPathway"/>
</dbReference>
<dbReference type="Gene3D" id="3.30.70.2450">
    <property type="match status" value="1"/>
</dbReference>
<dbReference type="Gene3D" id="3.50.50.60">
    <property type="entry name" value="FAD/NAD(P)-binding domain"/>
    <property type="match status" value="1"/>
</dbReference>
<dbReference type="HAMAP" id="MF_01652">
    <property type="entry name" value="MhpA"/>
    <property type="match status" value="1"/>
</dbReference>
<dbReference type="InterPro" id="IPR023786">
    <property type="entry name" value="3-HPP/3HCI_hydroxylase"/>
</dbReference>
<dbReference type="InterPro" id="IPR002938">
    <property type="entry name" value="FAD-bd"/>
</dbReference>
<dbReference type="InterPro" id="IPR036188">
    <property type="entry name" value="FAD/NAD-bd_sf"/>
</dbReference>
<dbReference type="InterPro" id="IPR050631">
    <property type="entry name" value="PheA/TfdB_FAD_monoxygenase"/>
</dbReference>
<dbReference type="NCBIfam" id="NF004828">
    <property type="entry name" value="PRK06183.1-2"/>
    <property type="match status" value="1"/>
</dbReference>
<dbReference type="NCBIfam" id="NF004829">
    <property type="entry name" value="PRK06183.1-3"/>
    <property type="match status" value="1"/>
</dbReference>
<dbReference type="NCBIfam" id="NF004831">
    <property type="entry name" value="PRK06183.1-5"/>
    <property type="match status" value="1"/>
</dbReference>
<dbReference type="PANTHER" id="PTHR43476">
    <property type="entry name" value="3-(3-HYDROXY-PHENYL)PROPIONATE/3-HYDROXYCINNAMIC ACID HYDROXYLASE"/>
    <property type="match status" value="1"/>
</dbReference>
<dbReference type="PANTHER" id="PTHR43476:SF3">
    <property type="entry name" value="FAD-BINDING MONOOXYGENASE"/>
    <property type="match status" value="1"/>
</dbReference>
<dbReference type="Pfam" id="PF01494">
    <property type="entry name" value="FAD_binding_3"/>
    <property type="match status" value="1"/>
</dbReference>
<dbReference type="PRINTS" id="PR00420">
    <property type="entry name" value="RNGMNOXGNASE"/>
</dbReference>
<dbReference type="SUPFAM" id="SSF51905">
    <property type="entry name" value="FAD/NAD(P)-binding domain"/>
    <property type="match status" value="1"/>
</dbReference>
<name>MHPA_MYCSS</name>
<comment type="function">
    <text evidence="1">Catalyzes the insertion of one atom of molecular oxygen into position 2 of the phenyl ring of 3-(3-hydroxyphenyl)propionate (3-HPP) and hydroxycinnamic acid (3HCI).</text>
</comment>
<comment type="catalytic activity">
    <reaction evidence="1">
        <text>3-(3-hydroxyphenyl)propanoate + NADH + O2 + H(+) = 3-(2,3-dihydroxyphenyl)propanoate + NAD(+) + H2O</text>
        <dbReference type="Rhea" id="RHEA:24785"/>
        <dbReference type="ChEBI" id="CHEBI:15377"/>
        <dbReference type="ChEBI" id="CHEBI:15378"/>
        <dbReference type="ChEBI" id="CHEBI:15379"/>
        <dbReference type="ChEBI" id="CHEBI:46951"/>
        <dbReference type="ChEBI" id="CHEBI:57277"/>
        <dbReference type="ChEBI" id="CHEBI:57540"/>
        <dbReference type="ChEBI" id="CHEBI:57945"/>
        <dbReference type="EC" id="1.14.13.127"/>
    </reaction>
</comment>
<comment type="catalytic activity">
    <reaction evidence="1">
        <text>(2E)-3-(3-hydroxyphenyl)prop-2-enoate + NADH + O2 + H(+) = (2E)-3-(2,3-dihydroxyphenyl)prop-2-enoate + NAD(+) + H2O</text>
        <dbReference type="Rhea" id="RHEA:27846"/>
        <dbReference type="ChEBI" id="CHEBI:15377"/>
        <dbReference type="ChEBI" id="CHEBI:15378"/>
        <dbReference type="ChEBI" id="CHEBI:15379"/>
        <dbReference type="ChEBI" id="CHEBI:47928"/>
        <dbReference type="ChEBI" id="CHEBI:57540"/>
        <dbReference type="ChEBI" id="CHEBI:57945"/>
        <dbReference type="ChEBI" id="CHEBI:58642"/>
        <dbReference type="EC" id="1.14.13.127"/>
    </reaction>
</comment>
<comment type="cofactor">
    <cofactor evidence="1">
        <name>FAD</name>
        <dbReference type="ChEBI" id="CHEBI:57692"/>
    </cofactor>
</comment>
<comment type="pathway">
    <text evidence="1">Aromatic compound metabolism; 3-phenylpropanoate degradation.</text>
</comment>
<comment type="similarity">
    <text evidence="1">Belongs to the PheA/TfdB FAD monooxygenase family.</text>
</comment>
<proteinExistence type="inferred from homology"/>
<accession>Q1B5E2</accession>
<sequence>MTPATARDATERDATDTDVVIVGAGPVGLTLANILGLQGVRTMIVEERATLIDYPRGVGLDDEALRTFQAIGLVDKVLPHTVPNQILRFFDGNRRLLAEMAPPDARFGWPKRNGFVQPMVDAELHAGLARFPHVEVRWGHRMAECEETADGVTVRLDGDPTPVRARYLVGCDGGRSATRRLMGVSFDGTTSPTRWLVVDIANDPLGHPNSEVGADPARPYASISIAHGIRRFEFMIHADETDEQAEDPAFIHRMLGLLVPHPERVEVIRHRVYTHHSRIAGAFRKGRMFLAGDAAHLMPVWQGQGYNSGIRDAANLGWKLAAVVDGRAGDALLDTYDVERRKHARAMIDLSTMVGRVISPTNRRVAAVRDKLIRGASVVPTLKRYVLEMRFKPMPRYEQGAVFHPEAPSPTSPAGTLFIQPRVDTRDAQNVLLDEVLGTGFAVLCWNNNPRALLGADLFDRWKALGARFVAARPLTQLHWTGHDDPDVTVIGDRTGALKGWFDAHAESVLFLRPDRCIAGACIAQRAPEVSTALFGVLHLTQGGGNGHHGADRPVLHVAQSATEPSGTVAGTP</sequence>
<protein>
    <recommendedName>
        <fullName evidence="1">3-(3-hydroxy-phenyl)propionate/3-hydroxycinnamic acid hydroxylase</fullName>
        <shortName evidence="1">3-HCI hydroxylase</shortName>
        <shortName evidence="1">3-HPP hydroxylase</shortName>
        <ecNumber evidence="1">1.14.13.127</ecNumber>
    </recommendedName>
</protein>
<reference key="1">
    <citation type="submission" date="2006-06" db="EMBL/GenBank/DDBJ databases">
        <title>Complete sequence of chromosome of Mycobacterium sp. MCS.</title>
        <authorList>
            <consortium name="US DOE Joint Genome Institute"/>
            <person name="Copeland A."/>
            <person name="Lucas S."/>
            <person name="Lapidus A."/>
            <person name="Barry K."/>
            <person name="Detter J.C."/>
            <person name="Glavina del Rio T."/>
            <person name="Hammon N."/>
            <person name="Israni S."/>
            <person name="Dalin E."/>
            <person name="Tice H."/>
            <person name="Pitluck S."/>
            <person name="Martinez M."/>
            <person name="Schmutz J."/>
            <person name="Larimer F."/>
            <person name="Land M."/>
            <person name="Hauser L."/>
            <person name="Kyrpides N."/>
            <person name="Kim E."/>
            <person name="Miller C.D."/>
            <person name="Hughes J.E."/>
            <person name="Anderson A.J."/>
            <person name="Sims R.C."/>
            <person name="Richardson P."/>
        </authorList>
    </citation>
    <scope>NUCLEOTIDE SEQUENCE [LARGE SCALE GENOMIC DNA]</scope>
    <source>
        <strain>MCS</strain>
    </source>
</reference>
<gene>
    <name evidence="1" type="primary">mhpA</name>
    <name type="ordered locus">Mmcs_3786</name>
</gene>
<organism>
    <name type="scientific">Mycobacterium sp. (strain MCS)</name>
    <dbReference type="NCBI Taxonomy" id="164756"/>
    <lineage>
        <taxon>Bacteria</taxon>
        <taxon>Bacillati</taxon>
        <taxon>Actinomycetota</taxon>
        <taxon>Actinomycetes</taxon>
        <taxon>Mycobacteriales</taxon>
        <taxon>Mycobacteriaceae</taxon>
        <taxon>Mycobacterium</taxon>
    </lineage>
</organism>